<sequence>MLDIKLIRKAPEECETRLRKKDPLISLQPILDLDKEIRHLKTETEALQSQRKLLSNQIHKAKAQGEDVSSMMDNVERISQDLAKLEPLLEQKESTLQDMLVRLPNYPDEDVPVCPDKTGNQVIKQVGALPTFSFTPKHHVELNQKLQILDFKLPAKTSGSGWPAYKNQGVCLEWALLTYLLNKQREHGFQLWLPPLLVKHEILFGSGQIPKFDGQYYRVEDGEQSLYLIPTAEVVLNGFHSQEIFSEKDLPIYYAAFTPCFRREAGAAGAHERGLVRVHQFHKVEMFAFTTPDQADQAYEKMLAVVEDILTELQLPYRLSLLSTGDMSFTASKTIDAEVWLPGQQSYYEVSSISQCTDFQSRRSETRYKDNRGKMHFVHTLNGSGLATPRLFVAILENNQQEDGSVIIPEVLRPYLENQEVLLP</sequence>
<feature type="chain" id="PRO_1000019648" description="Serine--tRNA ligase">
    <location>
        <begin position="1"/>
        <end position="424"/>
    </location>
</feature>
<feature type="binding site" evidence="1">
    <location>
        <begin position="231"/>
        <end position="233"/>
    </location>
    <ligand>
        <name>L-serine</name>
        <dbReference type="ChEBI" id="CHEBI:33384"/>
    </ligand>
</feature>
<feature type="binding site" evidence="1">
    <location>
        <begin position="262"/>
        <end position="264"/>
    </location>
    <ligand>
        <name>ATP</name>
        <dbReference type="ChEBI" id="CHEBI:30616"/>
    </ligand>
</feature>
<feature type="binding site" evidence="1">
    <location>
        <position position="278"/>
    </location>
    <ligand>
        <name>ATP</name>
        <dbReference type="ChEBI" id="CHEBI:30616"/>
    </ligand>
</feature>
<feature type="binding site" evidence="1">
    <location>
        <position position="285"/>
    </location>
    <ligand>
        <name>L-serine</name>
        <dbReference type="ChEBI" id="CHEBI:33384"/>
    </ligand>
</feature>
<feature type="binding site" evidence="1">
    <location>
        <begin position="349"/>
        <end position="352"/>
    </location>
    <ligand>
        <name>ATP</name>
        <dbReference type="ChEBI" id="CHEBI:30616"/>
    </ligand>
</feature>
<feature type="binding site" evidence="1">
    <location>
        <position position="384"/>
    </location>
    <ligand>
        <name>L-serine</name>
        <dbReference type="ChEBI" id="CHEBI:33384"/>
    </ligand>
</feature>
<gene>
    <name evidence="1" type="primary">serS</name>
    <name type="ordered locus">CAB865</name>
</gene>
<protein>
    <recommendedName>
        <fullName evidence="1">Serine--tRNA ligase</fullName>
        <ecNumber evidence="1">6.1.1.11</ecNumber>
    </recommendedName>
    <alternativeName>
        <fullName evidence="1">Seryl-tRNA synthetase</fullName>
        <shortName evidence="1">SerRS</shortName>
    </alternativeName>
    <alternativeName>
        <fullName evidence="1">Seryl-tRNA(Ser/Sec) synthetase</fullName>
    </alternativeName>
</protein>
<comment type="function">
    <text evidence="1">Catalyzes the attachment of serine to tRNA(Ser). Is also able to aminoacylate tRNA(Sec) with serine, to form the misacylated tRNA L-seryl-tRNA(Sec), which will be further converted into selenocysteinyl-tRNA(Sec).</text>
</comment>
<comment type="catalytic activity">
    <reaction evidence="1">
        <text>tRNA(Ser) + L-serine + ATP = L-seryl-tRNA(Ser) + AMP + diphosphate + H(+)</text>
        <dbReference type="Rhea" id="RHEA:12292"/>
        <dbReference type="Rhea" id="RHEA-COMP:9669"/>
        <dbReference type="Rhea" id="RHEA-COMP:9703"/>
        <dbReference type="ChEBI" id="CHEBI:15378"/>
        <dbReference type="ChEBI" id="CHEBI:30616"/>
        <dbReference type="ChEBI" id="CHEBI:33019"/>
        <dbReference type="ChEBI" id="CHEBI:33384"/>
        <dbReference type="ChEBI" id="CHEBI:78442"/>
        <dbReference type="ChEBI" id="CHEBI:78533"/>
        <dbReference type="ChEBI" id="CHEBI:456215"/>
        <dbReference type="EC" id="6.1.1.11"/>
    </reaction>
</comment>
<comment type="catalytic activity">
    <reaction evidence="1">
        <text>tRNA(Sec) + L-serine + ATP = L-seryl-tRNA(Sec) + AMP + diphosphate + H(+)</text>
        <dbReference type="Rhea" id="RHEA:42580"/>
        <dbReference type="Rhea" id="RHEA-COMP:9742"/>
        <dbReference type="Rhea" id="RHEA-COMP:10128"/>
        <dbReference type="ChEBI" id="CHEBI:15378"/>
        <dbReference type="ChEBI" id="CHEBI:30616"/>
        <dbReference type="ChEBI" id="CHEBI:33019"/>
        <dbReference type="ChEBI" id="CHEBI:33384"/>
        <dbReference type="ChEBI" id="CHEBI:78442"/>
        <dbReference type="ChEBI" id="CHEBI:78533"/>
        <dbReference type="ChEBI" id="CHEBI:456215"/>
        <dbReference type="EC" id="6.1.1.11"/>
    </reaction>
</comment>
<comment type="pathway">
    <text evidence="1">Aminoacyl-tRNA biosynthesis; selenocysteinyl-tRNA(Sec) biosynthesis; L-seryl-tRNA(Sec) from L-serine and tRNA(Sec): step 1/1.</text>
</comment>
<comment type="subunit">
    <text evidence="1">Homodimer. The tRNA molecule binds across the dimer.</text>
</comment>
<comment type="subcellular location">
    <subcellularLocation>
        <location evidence="1">Cytoplasm</location>
    </subcellularLocation>
</comment>
<comment type="domain">
    <text evidence="1">Consists of two distinct domains, a catalytic core and a N-terminal extension that is involved in tRNA binding.</text>
</comment>
<comment type="similarity">
    <text evidence="1">Belongs to the class-II aminoacyl-tRNA synthetase family. Type-1 seryl-tRNA synthetase subfamily.</text>
</comment>
<accession>Q5L4Z0</accession>
<keyword id="KW-0030">Aminoacyl-tRNA synthetase</keyword>
<keyword id="KW-0067">ATP-binding</keyword>
<keyword id="KW-0963">Cytoplasm</keyword>
<keyword id="KW-0436">Ligase</keyword>
<keyword id="KW-0547">Nucleotide-binding</keyword>
<keyword id="KW-0648">Protein biosynthesis</keyword>
<reference key="1">
    <citation type="journal article" date="2005" name="Genome Res.">
        <title>The Chlamydophila abortus genome sequence reveals an array of variable proteins that contribute to interspecies variation.</title>
        <authorList>
            <person name="Thomson N.R."/>
            <person name="Yeats C."/>
            <person name="Bell K."/>
            <person name="Holden M.T.G."/>
            <person name="Bentley S.D."/>
            <person name="Livingstone M."/>
            <person name="Cerdeno-Tarraga A.-M."/>
            <person name="Harris B."/>
            <person name="Doggett J."/>
            <person name="Ormond D."/>
            <person name="Mungall K."/>
            <person name="Clarke K."/>
            <person name="Feltwell T."/>
            <person name="Hance Z."/>
            <person name="Sanders M."/>
            <person name="Quail M.A."/>
            <person name="Price C."/>
            <person name="Barrell B.G."/>
            <person name="Parkhill J."/>
            <person name="Longbottom D."/>
        </authorList>
    </citation>
    <scope>NUCLEOTIDE SEQUENCE [LARGE SCALE GENOMIC DNA]</scope>
    <source>
        <strain>DSM 27085 / S26/3</strain>
    </source>
</reference>
<evidence type="ECO:0000255" key="1">
    <source>
        <dbReference type="HAMAP-Rule" id="MF_00176"/>
    </source>
</evidence>
<name>SYS_CHLAB</name>
<organism>
    <name type="scientific">Chlamydia abortus (strain DSM 27085 / S26/3)</name>
    <name type="common">Chlamydophila abortus</name>
    <dbReference type="NCBI Taxonomy" id="218497"/>
    <lineage>
        <taxon>Bacteria</taxon>
        <taxon>Pseudomonadati</taxon>
        <taxon>Chlamydiota</taxon>
        <taxon>Chlamydiia</taxon>
        <taxon>Chlamydiales</taxon>
        <taxon>Chlamydiaceae</taxon>
        <taxon>Chlamydia/Chlamydophila group</taxon>
        <taxon>Chlamydia</taxon>
    </lineage>
</organism>
<dbReference type="EC" id="6.1.1.11" evidence="1"/>
<dbReference type="EMBL" id="CR848038">
    <property type="protein sequence ID" value="CAH64305.1"/>
    <property type="molecule type" value="Genomic_DNA"/>
</dbReference>
<dbReference type="RefSeq" id="WP_011097386.1">
    <property type="nucleotide sequence ID" value="NC_004552.2"/>
</dbReference>
<dbReference type="SMR" id="Q5L4Z0"/>
<dbReference type="KEGG" id="cab:CAB865"/>
<dbReference type="eggNOG" id="COG0172">
    <property type="taxonomic scope" value="Bacteria"/>
</dbReference>
<dbReference type="HOGENOM" id="CLU_023797_1_1_0"/>
<dbReference type="OrthoDB" id="9804647at2"/>
<dbReference type="UniPathway" id="UPA00906">
    <property type="reaction ID" value="UER00895"/>
</dbReference>
<dbReference type="Proteomes" id="UP000001012">
    <property type="component" value="Chromosome"/>
</dbReference>
<dbReference type="GO" id="GO:0005737">
    <property type="term" value="C:cytoplasm"/>
    <property type="evidence" value="ECO:0007669"/>
    <property type="project" value="UniProtKB-SubCell"/>
</dbReference>
<dbReference type="GO" id="GO:0005524">
    <property type="term" value="F:ATP binding"/>
    <property type="evidence" value="ECO:0007669"/>
    <property type="project" value="UniProtKB-UniRule"/>
</dbReference>
<dbReference type="GO" id="GO:0004828">
    <property type="term" value="F:serine-tRNA ligase activity"/>
    <property type="evidence" value="ECO:0007669"/>
    <property type="project" value="UniProtKB-UniRule"/>
</dbReference>
<dbReference type="GO" id="GO:0016260">
    <property type="term" value="P:selenocysteine biosynthetic process"/>
    <property type="evidence" value="ECO:0007669"/>
    <property type="project" value="UniProtKB-UniRule"/>
</dbReference>
<dbReference type="GO" id="GO:0006434">
    <property type="term" value="P:seryl-tRNA aminoacylation"/>
    <property type="evidence" value="ECO:0007669"/>
    <property type="project" value="UniProtKB-UniRule"/>
</dbReference>
<dbReference type="CDD" id="cd00770">
    <property type="entry name" value="SerRS_core"/>
    <property type="match status" value="1"/>
</dbReference>
<dbReference type="Gene3D" id="3.30.930.10">
    <property type="entry name" value="Bira Bifunctional Protein, Domain 2"/>
    <property type="match status" value="1"/>
</dbReference>
<dbReference type="Gene3D" id="1.10.287.40">
    <property type="entry name" value="Serine-tRNA synthetase, tRNA binding domain"/>
    <property type="match status" value="1"/>
</dbReference>
<dbReference type="HAMAP" id="MF_00176">
    <property type="entry name" value="Ser_tRNA_synth_type1"/>
    <property type="match status" value="1"/>
</dbReference>
<dbReference type="InterPro" id="IPR002314">
    <property type="entry name" value="aa-tRNA-synt_IIb"/>
</dbReference>
<dbReference type="InterPro" id="IPR006195">
    <property type="entry name" value="aa-tRNA-synth_II"/>
</dbReference>
<dbReference type="InterPro" id="IPR045864">
    <property type="entry name" value="aa-tRNA-synth_II/BPL/LPL"/>
</dbReference>
<dbReference type="InterPro" id="IPR002317">
    <property type="entry name" value="Ser-tRNA-ligase_type_1"/>
</dbReference>
<dbReference type="InterPro" id="IPR015866">
    <property type="entry name" value="Ser-tRNA-synth_1_N"/>
</dbReference>
<dbReference type="InterPro" id="IPR042103">
    <property type="entry name" value="SerRS_1_N_sf"/>
</dbReference>
<dbReference type="InterPro" id="IPR033729">
    <property type="entry name" value="SerRS_core"/>
</dbReference>
<dbReference type="InterPro" id="IPR010978">
    <property type="entry name" value="tRNA-bd_arm"/>
</dbReference>
<dbReference type="NCBIfam" id="TIGR00414">
    <property type="entry name" value="serS"/>
    <property type="match status" value="1"/>
</dbReference>
<dbReference type="PANTHER" id="PTHR43697:SF1">
    <property type="entry name" value="SERINE--TRNA LIGASE"/>
    <property type="match status" value="1"/>
</dbReference>
<dbReference type="PANTHER" id="PTHR43697">
    <property type="entry name" value="SERYL-TRNA SYNTHETASE"/>
    <property type="match status" value="1"/>
</dbReference>
<dbReference type="Pfam" id="PF02403">
    <property type="entry name" value="Seryl_tRNA_N"/>
    <property type="match status" value="1"/>
</dbReference>
<dbReference type="Pfam" id="PF00587">
    <property type="entry name" value="tRNA-synt_2b"/>
    <property type="match status" value="1"/>
</dbReference>
<dbReference type="PIRSF" id="PIRSF001529">
    <property type="entry name" value="Ser-tRNA-synth_IIa"/>
    <property type="match status" value="1"/>
</dbReference>
<dbReference type="PRINTS" id="PR00981">
    <property type="entry name" value="TRNASYNTHSER"/>
</dbReference>
<dbReference type="SUPFAM" id="SSF55681">
    <property type="entry name" value="Class II aaRS and biotin synthetases"/>
    <property type="match status" value="1"/>
</dbReference>
<dbReference type="SUPFAM" id="SSF46589">
    <property type="entry name" value="tRNA-binding arm"/>
    <property type="match status" value="1"/>
</dbReference>
<dbReference type="PROSITE" id="PS50862">
    <property type="entry name" value="AA_TRNA_LIGASE_II"/>
    <property type="match status" value="1"/>
</dbReference>
<proteinExistence type="inferred from homology"/>